<keyword id="KW-0119">Carbohydrate metabolism</keyword>
<keyword id="KW-0963">Cytoplasm</keyword>
<keyword id="KW-0378">Hydrolase</keyword>
<keyword id="KW-0460">Magnesium</keyword>
<keyword id="KW-0479">Metal-binding</keyword>
<organism>
    <name type="scientific">Bordetella parapertussis (strain 12822 / ATCC BAA-587 / NCTC 13253)</name>
    <dbReference type="NCBI Taxonomy" id="257311"/>
    <lineage>
        <taxon>Bacteria</taxon>
        <taxon>Pseudomonadati</taxon>
        <taxon>Pseudomonadota</taxon>
        <taxon>Betaproteobacteria</taxon>
        <taxon>Burkholderiales</taxon>
        <taxon>Alcaligenaceae</taxon>
        <taxon>Bordetella</taxon>
    </lineage>
</organism>
<sequence>MKRKTLTQYLVEQQRSAQALGPEVRLLIEVVARACKAISHAVSKGALGGVLGSLESENVQGEVQKKLDVLSNEILLEANEWGGHLAAMASEEMETIHLIPNRYPKGEYLLLFDPLDGSSNIDVNVSIGTIFSVLRAPHRVAGADVCEQDFLQPGSQQVAAGYAVYGPQTMLVLTIGNGVVGFTLDREMGSWVLTHESMRIPEDTKEFAINMSNMRHWAPPVKRYIDECLAGKTGPLGKDYNMRWIASMVADVHRILTRGGIFMYPWDAREPGKAGKLRLMYEANPMGLIVEQAGGAAIDGTGRILDIQPDKLHQRVSVILGSKNEVERVGRYHAEAHAS</sequence>
<accession>Q7W7N2</accession>
<dbReference type="EC" id="3.1.3.11" evidence="1"/>
<dbReference type="EMBL" id="BX640430">
    <property type="protein sequence ID" value="CAE37777.1"/>
    <property type="molecule type" value="Genomic_DNA"/>
</dbReference>
<dbReference type="RefSeq" id="WP_003813068.1">
    <property type="nucleotide sequence ID" value="NC_002928.3"/>
</dbReference>
<dbReference type="SMR" id="Q7W7N2"/>
<dbReference type="KEGG" id="bpa:BPP2482"/>
<dbReference type="HOGENOM" id="CLU_039977_0_0_4"/>
<dbReference type="UniPathway" id="UPA00138"/>
<dbReference type="Proteomes" id="UP000001421">
    <property type="component" value="Chromosome"/>
</dbReference>
<dbReference type="GO" id="GO:0005829">
    <property type="term" value="C:cytosol"/>
    <property type="evidence" value="ECO:0007669"/>
    <property type="project" value="TreeGrafter"/>
</dbReference>
<dbReference type="GO" id="GO:0042132">
    <property type="term" value="F:fructose 1,6-bisphosphate 1-phosphatase activity"/>
    <property type="evidence" value="ECO:0007669"/>
    <property type="project" value="UniProtKB-UniRule"/>
</dbReference>
<dbReference type="GO" id="GO:0000287">
    <property type="term" value="F:magnesium ion binding"/>
    <property type="evidence" value="ECO:0007669"/>
    <property type="project" value="UniProtKB-UniRule"/>
</dbReference>
<dbReference type="GO" id="GO:0030388">
    <property type="term" value="P:fructose 1,6-bisphosphate metabolic process"/>
    <property type="evidence" value="ECO:0007669"/>
    <property type="project" value="TreeGrafter"/>
</dbReference>
<dbReference type="GO" id="GO:0006002">
    <property type="term" value="P:fructose 6-phosphate metabolic process"/>
    <property type="evidence" value="ECO:0007669"/>
    <property type="project" value="TreeGrafter"/>
</dbReference>
<dbReference type="GO" id="GO:0006000">
    <property type="term" value="P:fructose metabolic process"/>
    <property type="evidence" value="ECO:0007669"/>
    <property type="project" value="TreeGrafter"/>
</dbReference>
<dbReference type="GO" id="GO:0006094">
    <property type="term" value="P:gluconeogenesis"/>
    <property type="evidence" value="ECO:0007669"/>
    <property type="project" value="UniProtKB-UniRule"/>
</dbReference>
<dbReference type="GO" id="GO:0005986">
    <property type="term" value="P:sucrose biosynthetic process"/>
    <property type="evidence" value="ECO:0007669"/>
    <property type="project" value="TreeGrafter"/>
</dbReference>
<dbReference type="CDD" id="cd00354">
    <property type="entry name" value="FBPase"/>
    <property type="match status" value="1"/>
</dbReference>
<dbReference type="FunFam" id="3.30.540.10:FF:000006">
    <property type="entry name" value="Fructose-1,6-bisphosphatase class 1"/>
    <property type="match status" value="1"/>
</dbReference>
<dbReference type="FunFam" id="3.40.190.80:FF:000011">
    <property type="entry name" value="Fructose-1,6-bisphosphatase class 1"/>
    <property type="match status" value="1"/>
</dbReference>
<dbReference type="Gene3D" id="3.40.190.80">
    <property type="match status" value="1"/>
</dbReference>
<dbReference type="Gene3D" id="3.30.540.10">
    <property type="entry name" value="Fructose-1,6-Bisphosphatase, subunit A, domain 1"/>
    <property type="match status" value="1"/>
</dbReference>
<dbReference type="HAMAP" id="MF_01855">
    <property type="entry name" value="FBPase_class1"/>
    <property type="match status" value="1"/>
</dbReference>
<dbReference type="InterPro" id="IPR044015">
    <property type="entry name" value="FBPase_C_dom"/>
</dbReference>
<dbReference type="InterPro" id="IPR000146">
    <property type="entry name" value="FBPase_class-1"/>
</dbReference>
<dbReference type="InterPro" id="IPR033391">
    <property type="entry name" value="FBPase_N"/>
</dbReference>
<dbReference type="InterPro" id="IPR028343">
    <property type="entry name" value="FBPtase"/>
</dbReference>
<dbReference type="NCBIfam" id="NF006778">
    <property type="entry name" value="PRK09293.1-1"/>
    <property type="match status" value="1"/>
</dbReference>
<dbReference type="NCBIfam" id="NF006779">
    <property type="entry name" value="PRK09293.1-3"/>
    <property type="match status" value="1"/>
</dbReference>
<dbReference type="NCBIfam" id="NF006780">
    <property type="entry name" value="PRK09293.1-4"/>
    <property type="match status" value="1"/>
</dbReference>
<dbReference type="PANTHER" id="PTHR11556">
    <property type="entry name" value="FRUCTOSE-1,6-BISPHOSPHATASE-RELATED"/>
    <property type="match status" value="1"/>
</dbReference>
<dbReference type="PANTHER" id="PTHR11556:SF35">
    <property type="entry name" value="SEDOHEPTULOSE-1,7-BISPHOSPHATASE, CHLOROPLASTIC"/>
    <property type="match status" value="1"/>
</dbReference>
<dbReference type="Pfam" id="PF00316">
    <property type="entry name" value="FBPase"/>
    <property type="match status" value="1"/>
</dbReference>
<dbReference type="Pfam" id="PF18913">
    <property type="entry name" value="FBPase_C"/>
    <property type="match status" value="1"/>
</dbReference>
<dbReference type="PIRSF" id="PIRSF500210">
    <property type="entry name" value="FBPtase"/>
    <property type="match status" value="1"/>
</dbReference>
<dbReference type="PIRSF" id="PIRSF000904">
    <property type="entry name" value="FBPtase_SBPase"/>
    <property type="match status" value="1"/>
</dbReference>
<dbReference type="PRINTS" id="PR00115">
    <property type="entry name" value="F16BPHPHTASE"/>
</dbReference>
<dbReference type="SUPFAM" id="SSF56655">
    <property type="entry name" value="Carbohydrate phosphatase"/>
    <property type="match status" value="1"/>
</dbReference>
<reference key="1">
    <citation type="journal article" date="2003" name="Nat. Genet.">
        <title>Comparative analysis of the genome sequences of Bordetella pertussis, Bordetella parapertussis and Bordetella bronchiseptica.</title>
        <authorList>
            <person name="Parkhill J."/>
            <person name="Sebaihia M."/>
            <person name="Preston A."/>
            <person name="Murphy L.D."/>
            <person name="Thomson N.R."/>
            <person name="Harris D.E."/>
            <person name="Holden M.T.G."/>
            <person name="Churcher C.M."/>
            <person name="Bentley S.D."/>
            <person name="Mungall K.L."/>
            <person name="Cerdeno-Tarraga A.-M."/>
            <person name="Temple L."/>
            <person name="James K.D."/>
            <person name="Harris B."/>
            <person name="Quail M.A."/>
            <person name="Achtman M."/>
            <person name="Atkin R."/>
            <person name="Baker S."/>
            <person name="Basham D."/>
            <person name="Bason N."/>
            <person name="Cherevach I."/>
            <person name="Chillingworth T."/>
            <person name="Collins M."/>
            <person name="Cronin A."/>
            <person name="Davis P."/>
            <person name="Doggett J."/>
            <person name="Feltwell T."/>
            <person name="Goble A."/>
            <person name="Hamlin N."/>
            <person name="Hauser H."/>
            <person name="Holroyd S."/>
            <person name="Jagels K."/>
            <person name="Leather S."/>
            <person name="Moule S."/>
            <person name="Norberczak H."/>
            <person name="O'Neil S."/>
            <person name="Ormond D."/>
            <person name="Price C."/>
            <person name="Rabbinowitsch E."/>
            <person name="Rutter S."/>
            <person name="Sanders M."/>
            <person name="Saunders D."/>
            <person name="Seeger K."/>
            <person name="Sharp S."/>
            <person name="Simmonds M."/>
            <person name="Skelton J."/>
            <person name="Squares R."/>
            <person name="Squares S."/>
            <person name="Stevens K."/>
            <person name="Unwin L."/>
            <person name="Whitehead S."/>
            <person name="Barrell B.G."/>
            <person name="Maskell D.J."/>
        </authorList>
    </citation>
    <scope>NUCLEOTIDE SEQUENCE [LARGE SCALE GENOMIC DNA]</scope>
    <source>
        <strain>12822 / ATCC BAA-587 / NCTC 13253</strain>
    </source>
</reference>
<proteinExistence type="inferred from homology"/>
<name>F16PA_BORPA</name>
<comment type="catalytic activity">
    <reaction evidence="1">
        <text>beta-D-fructose 1,6-bisphosphate + H2O = beta-D-fructose 6-phosphate + phosphate</text>
        <dbReference type="Rhea" id="RHEA:11064"/>
        <dbReference type="ChEBI" id="CHEBI:15377"/>
        <dbReference type="ChEBI" id="CHEBI:32966"/>
        <dbReference type="ChEBI" id="CHEBI:43474"/>
        <dbReference type="ChEBI" id="CHEBI:57634"/>
        <dbReference type="EC" id="3.1.3.11"/>
    </reaction>
</comment>
<comment type="cofactor">
    <cofactor evidence="1">
        <name>Mg(2+)</name>
        <dbReference type="ChEBI" id="CHEBI:18420"/>
    </cofactor>
    <text evidence="1">Binds 2 magnesium ions per subunit.</text>
</comment>
<comment type="pathway">
    <text evidence="1">Carbohydrate biosynthesis; gluconeogenesis.</text>
</comment>
<comment type="subunit">
    <text evidence="1">Homotetramer.</text>
</comment>
<comment type="subcellular location">
    <subcellularLocation>
        <location evidence="1">Cytoplasm</location>
    </subcellularLocation>
</comment>
<comment type="similarity">
    <text evidence="1">Belongs to the FBPase class 1 family.</text>
</comment>
<feature type="chain" id="PRO_0000364469" description="Fructose-1,6-bisphosphatase class 1">
    <location>
        <begin position="1"/>
        <end position="339"/>
    </location>
</feature>
<feature type="binding site" evidence="1">
    <location>
        <position position="91"/>
    </location>
    <ligand>
        <name>Mg(2+)</name>
        <dbReference type="ChEBI" id="CHEBI:18420"/>
        <label>1</label>
    </ligand>
</feature>
<feature type="binding site" evidence="1">
    <location>
        <position position="113"/>
    </location>
    <ligand>
        <name>Mg(2+)</name>
        <dbReference type="ChEBI" id="CHEBI:18420"/>
        <label>1</label>
    </ligand>
</feature>
<feature type="binding site" evidence="1">
    <location>
        <position position="113"/>
    </location>
    <ligand>
        <name>Mg(2+)</name>
        <dbReference type="ChEBI" id="CHEBI:18420"/>
        <label>2</label>
    </ligand>
</feature>
<feature type="binding site" evidence="1">
    <location>
        <position position="115"/>
    </location>
    <ligand>
        <name>Mg(2+)</name>
        <dbReference type="ChEBI" id="CHEBI:18420"/>
        <label>1</label>
    </ligand>
</feature>
<feature type="binding site" evidence="1">
    <location>
        <begin position="116"/>
        <end position="119"/>
    </location>
    <ligand>
        <name>substrate</name>
    </ligand>
</feature>
<feature type="binding site" evidence="1">
    <location>
        <position position="116"/>
    </location>
    <ligand>
        <name>Mg(2+)</name>
        <dbReference type="ChEBI" id="CHEBI:18420"/>
        <label>2</label>
    </ligand>
</feature>
<feature type="binding site" evidence="1">
    <location>
        <position position="210"/>
    </location>
    <ligand>
        <name>substrate</name>
    </ligand>
</feature>
<feature type="binding site" evidence="1">
    <location>
        <position position="276"/>
    </location>
    <ligand>
        <name>substrate</name>
    </ligand>
</feature>
<feature type="binding site" evidence="1">
    <location>
        <position position="282"/>
    </location>
    <ligand>
        <name>Mg(2+)</name>
        <dbReference type="ChEBI" id="CHEBI:18420"/>
        <label>2</label>
    </ligand>
</feature>
<gene>
    <name evidence="1" type="primary">fbp</name>
    <name type="ordered locus">BPP2482</name>
</gene>
<evidence type="ECO:0000255" key="1">
    <source>
        <dbReference type="HAMAP-Rule" id="MF_01855"/>
    </source>
</evidence>
<protein>
    <recommendedName>
        <fullName evidence="1">Fructose-1,6-bisphosphatase class 1</fullName>
        <shortName evidence="1">FBPase class 1</shortName>
        <ecNumber evidence="1">3.1.3.11</ecNumber>
    </recommendedName>
    <alternativeName>
        <fullName evidence="1">D-fructose-1,6-bisphosphate 1-phosphohydrolase class 1</fullName>
    </alternativeName>
</protein>